<sequence length="200" mass="22615">MGNGLSDQTSILSNLPSFQSFHIVILGLDCAGKTTVLYRLQFNEFVNTVPTKGFNTEKIKVTLGNSKTVTFHFWDVGGQEKLRPLWKSYTRCTDGIVFVVDSVDVERMEEAKTELHKITRISENQGVPVLIVANKQDLRNSLSLSEIEKLLAMGELSSSTPWHLQPTCAIIGDGLKEGLEKLHDMIIKRRKMLRQQKKKR</sequence>
<organism>
    <name type="scientific">Homo sapiens</name>
    <name type="common">Human</name>
    <dbReference type="NCBI Taxonomy" id="9606"/>
    <lineage>
        <taxon>Eukaryota</taxon>
        <taxon>Metazoa</taxon>
        <taxon>Chordata</taxon>
        <taxon>Craniata</taxon>
        <taxon>Vertebrata</taxon>
        <taxon>Euteleostomi</taxon>
        <taxon>Mammalia</taxon>
        <taxon>Eutheria</taxon>
        <taxon>Euarchontoglires</taxon>
        <taxon>Primates</taxon>
        <taxon>Haplorrhini</taxon>
        <taxon>Catarrhini</taxon>
        <taxon>Hominidae</taxon>
        <taxon>Homo</taxon>
    </lineage>
</organism>
<comment type="function">
    <text evidence="3 4">Small GTP-binding protein which cycles between an inactive GDP-bound and an active GTP-bound form, and the rate of cycling is regulated by guanine nucleotide exchange factors (GEF) and GTPase-activating proteins (GAP). GTP-binding protein that does not act as an allosteric activator of the cholera toxin catalytic subunit. Recruits CYTH1, CYTH2, CYTH3 and CYTH4 to the plasma membrane in GDP-bound form.</text>
</comment>
<comment type="subunit">
    <text evidence="3 4">Interacts with CYTH2. Interacts with KPNA2; the interaction is direct. Does not interact with ARL4A.</text>
</comment>
<comment type="interaction">
    <interactant intactId="EBI-2875746">
        <id>P40617</id>
    </interactant>
    <interactant intactId="EBI-10171570">
        <id>Q68D86</id>
        <label>CCDC102B</label>
    </interactant>
    <organismsDiffer>false</organismsDiffer>
    <experiments>3</experiments>
</comment>
<comment type="interaction">
    <interactant intactId="EBI-2875746">
        <id>P40617</id>
    </interactant>
    <interactant intactId="EBI-2808286">
        <id>Q2TAC2</id>
        <label>CCDC57</label>
    </interactant>
    <organismsDiffer>false</organismsDiffer>
    <experiments>3</experiments>
</comment>
<comment type="interaction">
    <interactant intactId="EBI-2875746">
        <id>P40617</id>
    </interactant>
    <interactant intactId="EBI-852291">
        <id>O60447</id>
        <label>EVI5</label>
    </interactant>
    <organismsDiffer>false</organismsDiffer>
    <experiments>3</experiments>
</comment>
<comment type="interaction">
    <interactant intactId="EBI-2875746">
        <id>P40617</id>
    </interactant>
    <interactant intactId="EBI-618309">
        <id>Q08379</id>
        <label>GOLGA2</label>
    </interactant>
    <organismsDiffer>false</organismsDiffer>
    <experiments>6</experiments>
</comment>
<comment type="interaction">
    <interactant intactId="EBI-2875746">
        <id>P40617</id>
    </interactant>
    <interactant intactId="EBI-742756">
        <id>P08727</id>
        <label>KRT19</label>
    </interactant>
    <organismsDiffer>false</organismsDiffer>
    <experiments>3</experiments>
</comment>
<comment type="interaction">
    <interactant intactId="EBI-2875746">
        <id>P40617</id>
    </interactant>
    <interactant intactId="EBI-11522433">
        <id>Q5JR59-3</id>
        <label>MTUS2</label>
    </interactant>
    <organismsDiffer>false</organismsDiffer>
    <experiments>3</experiments>
</comment>
<comment type="interaction">
    <interactant intactId="EBI-2875746">
        <id>P40617</id>
    </interactant>
    <interactant intactId="EBI-11986735">
        <id>Q8WVV4-1</id>
        <label>POF1B</label>
    </interactant>
    <organismsDiffer>false</organismsDiffer>
    <experiments>3</experiments>
</comment>
<comment type="interaction">
    <interactant intactId="EBI-2875746">
        <id>P40617</id>
    </interactant>
    <interactant intactId="EBI-372911">
        <id>Q9H0A9</id>
        <label>SPATC1L</label>
    </interactant>
    <organismsDiffer>false</organismsDiffer>
    <experiments>3</experiments>
</comment>
<comment type="subcellular location">
    <subcellularLocation>
        <location>Cell membrane</location>
    </subcellularLocation>
    <subcellularLocation>
        <location>Cytoplasm</location>
    </subcellularLocation>
    <subcellularLocation>
        <location>Nucleus</location>
        <location>Nucleolus</location>
    </subcellularLocation>
    <text>Localization in the nucleolus is dependent by nucleotide binding.</text>
</comment>
<comment type="PTM">
    <text evidence="3">Myristoylated.</text>
</comment>
<comment type="similarity">
    <text evidence="5">Belongs to the small GTPase superfamily. Arf family.</text>
</comment>
<dbReference type="EMBL" id="U73960">
    <property type="protein sequence ID" value="AAB39713.1"/>
    <property type="molecule type" value="mRNA"/>
</dbReference>
<dbReference type="EMBL" id="AK313233">
    <property type="protein sequence ID" value="BAG36044.1"/>
    <property type="molecule type" value="mRNA"/>
</dbReference>
<dbReference type="EMBL" id="AF493890">
    <property type="protein sequence ID" value="AAM12604.1"/>
    <property type="molecule type" value="mRNA"/>
</dbReference>
<dbReference type="EMBL" id="CH236948">
    <property type="protein sequence ID" value="EAL24295.1"/>
    <property type="molecule type" value="Genomic_DNA"/>
</dbReference>
<dbReference type="EMBL" id="CH471073">
    <property type="protein sequence ID" value="EAW93650.1"/>
    <property type="molecule type" value="Genomic_DNA"/>
</dbReference>
<dbReference type="EMBL" id="BC001111">
    <property type="protein sequence ID" value="AAH01111.1"/>
    <property type="molecule type" value="mRNA"/>
</dbReference>
<dbReference type="EMBL" id="BC003027">
    <property type="protein sequence ID" value="AAH03027.1"/>
    <property type="molecule type" value="mRNA"/>
</dbReference>
<dbReference type="CCDS" id="CCDS5359.1"/>
<dbReference type="RefSeq" id="NP_001032241.1">
    <property type="nucleotide sequence ID" value="NM_001037164.3"/>
</dbReference>
<dbReference type="RefSeq" id="NP_001182325.1">
    <property type="nucleotide sequence ID" value="NM_001195396.2"/>
</dbReference>
<dbReference type="RefSeq" id="NP_005729.1">
    <property type="nucleotide sequence ID" value="NM_005738.5"/>
</dbReference>
<dbReference type="RefSeq" id="NP_997625.1">
    <property type="nucleotide sequence ID" value="NM_212460.4"/>
</dbReference>
<dbReference type="SMR" id="P40617"/>
<dbReference type="BioGRID" id="115428">
    <property type="interactions" value="19"/>
</dbReference>
<dbReference type="FunCoup" id="P40617">
    <property type="interactions" value="2464"/>
</dbReference>
<dbReference type="IntAct" id="P40617">
    <property type="interactions" value="10"/>
</dbReference>
<dbReference type="STRING" id="9606.ENSP00000379898"/>
<dbReference type="GlyGen" id="P40617">
    <property type="glycosylation" value="1 site, 1 O-linked glycan (1 site)"/>
</dbReference>
<dbReference type="iPTMnet" id="P40617"/>
<dbReference type="PhosphoSitePlus" id="P40617"/>
<dbReference type="BioMuta" id="ARL4A"/>
<dbReference type="DMDM" id="1168495"/>
<dbReference type="jPOST" id="P40617"/>
<dbReference type="MassIVE" id="P40617"/>
<dbReference type="PaxDb" id="9606-ENSP00000379898"/>
<dbReference type="PeptideAtlas" id="P40617"/>
<dbReference type="ProteomicsDB" id="55376"/>
<dbReference type="Pumba" id="P40617"/>
<dbReference type="Antibodypedia" id="25147">
    <property type="antibodies" value="201 antibodies from 31 providers"/>
</dbReference>
<dbReference type="DNASU" id="10124"/>
<dbReference type="Ensembl" id="ENST00000356797.7">
    <property type="protein sequence ID" value="ENSP00000349250.3"/>
    <property type="gene ID" value="ENSG00000122644.13"/>
</dbReference>
<dbReference type="Ensembl" id="ENST00000396662.5">
    <property type="protein sequence ID" value="ENSP00000379897.1"/>
    <property type="gene ID" value="ENSG00000122644.13"/>
</dbReference>
<dbReference type="Ensembl" id="ENST00000396663.2">
    <property type="protein sequence ID" value="ENSP00000379898.1"/>
    <property type="gene ID" value="ENSG00000122644.13"/>
</dbReference>
<dbReference type="Ensembl" id="ENST00000396664.2">
    <property type="protein sequence ID" value="ENSP00000379899.2"/>
    <property type="gene ID" value="ENSG00000122644.13"/>
</dbReference>
<dbReference type="Ensembl" id="ENST00000404894.1">
    <property type="protein sequence ID" value="ENSP00000385236.1"/>
    <property type="gene ID" value="ENSG00000122644.13"/>
</dbReference>
<dbReference type="Ensembl" id="ENST00000651779.1">
    <property type="protein sequence ID" value="ENSP00000498350.1"/>
    <property type="gene ID" value="ENSG00000122644.13"/>
</dbReference>
<dbReference type="GeneID" id="10124"/>
<dbReference type="KEGG" id="hsa:10124"/>
<dbReference type="MANE-Select" id="ENST00000651779.1">
    <property type="protein sequence ID" value="ENSP00000498350.1"/>
    <property type="RefSeq nucleotide sequence ID" value="NM_005738.5"/>
    <property type="RefSeq protein sequence ID" value="NP_005729.1"/>
</dbReference>
<dbReference type="UCSC" id="uc003ssp.4">
    <property type="organism name" value="human"/>
</dbReference>
<dbReference type="AGR" id="HGNC:695"/>
<dbReference type="CTD" id="10124"/>
<dbReference type="DisGeNET" id="10124"/>
<dbReference type="GeneCards" id="ARL4A"/>
<dbReference type="HGNC" id="HGNC:695">
    <property type="gene designation" value="ARL4A"/>
</dbReference>
<dbReference type="HPA" id="ENSG00000122644">
    <property type="expression patterns" value="Tissue enhanced (testis)"/>
</dbReference>
<dbReference type="MIM" id="604786">
    <property type="type" value="gene"/>
</dbReference>
<dbReference type="neXtProt" id="NX_P40617"/>
<dbReference type="OpenTargets" id="ENSG00000122644"/>
<dbReference type="PharmGKB" id="PA24988"/>
<dbReference type="VEuPathDB" id="HostDB:ENSG00000122644"/>
<dbReference type="eggNOG" id="KOG0070">
    <property type="taxonomic scope" value="Eukaryota"/>
</dbReference>
<dbReference type="GeneTree" id="ENSGT00940000154546"/>
<dbReference type="HOGENOM" id="CLU_040729_9_3_1"/>
<dbReference type="InParanoid" id="P40617"/>
<dbReference type="OMA" id="CHCGSHI"/>
<dbReference type="OrthoDB" id="2011769at2759"/>
<dbReference type="PAN-GO" id="P40617">
    <property type="GO annotations" value="5 GO annotations based on evolutionary models"/>
</dbReference>
<dbReference type="PhylomeDB" id="P40617"/>
<dbReference type="TreeFam" id="TF105464"/>
<dbReference type="PathwayCommons" id="P40617"/>
<dbReference type="SignaLink" id="P40617"/>
<dbReference type="BioGRID-ORCS" id="10124">
    <property type="hits" value="69 hits in 1084 CRISPR screens"/>
</dbReference>
<dbReference type="ChiTaRS" id="ARL4A">
    <property type="organism name" value="human"/>
</dbReference>
<dbReference type="GeneWiki" id="ARL4A"/>
<dbReference type="GenomeRNAi" id="10124"/>
<dbReference type="Pharos" id="P40617">
    <property type="development level" value="Tbio"/>
</dbReference>
<dbReference type="PRO" id="PR:P40617"/>
<dbReference type="Proteomes" id="UP000005640">
    <property type="component" value="Chromosome 7"/>
</dbReference>
<dbReference type="RNAct" id="P40617">
    <property type="molecule type" value="protein"/>
</dbReference>
<dbReference type="Bgee" id="ENSG00000122644">
    <property type="expression patterns" value="Expressed in left testis and 102 other cell types or tissues"/>
</dbReference>
<dbReference type="ExpressionAtlas" id="P40617">
    <property type="expression patterns" value="baseline and differential"/>
</dbReference>
<dbReference type="GO" id="GO:0005737">
    <property type="term" value="C:cytoplasm"/>
    <property type="evidence" value="ECO:0000318"/>
    <property type="project" value="GO_Central"/>
</dbReference>
<dbReference type="GO" id="GO:0005829">
    <property type="term" value="C:cytosol"/>
    <property type="evidence" value="ECO:0000314"/>
    <property type="project" value="HPA"/>
</dbReference>
<dbReference type="GO" id="GO:0005730">
    <property type="term" value="C:nucleolus"/>
    <property type="evidence" value="ECO:0000314"/>
    <property type="project" value="UniProtKB"/>
</dbReference>
<dbReference type="GO" id="GO:0005654">
    <property type="term" value="C:nucleoplasm"/>
    <property type="evidence" value="ECO:0000314"/>
    <property type="project" value="HPA"/>
</dbReference>
<dbReference type="GO" id="GO:0005634">
    <property type="term" value="C:nucleus"/>
    <property type="evidence" value="ECO:0000314"/>
    <property type="project" value="UniProtKB"/>
</dbReference>
<dbReference type="GO" id="GO:0005886">
    <property type="term" value="C:plasma membrane"/>
    <property type="evidence" value="ECO:0000314"/>
    <property type="project" value="UniProtKB"/>
</dbReference>
<dbReference type="GO" id="GO:0005525">
    <property type="term" value="F:GTP binding"/>
    <property type="evidence" value="ECO:0000314"/>
    <property type="project" value="UniProtKB"/>
</dbReference>
<dbReference type="GO" id="GO:0003924">
    <property type="term" value="F:GTPase activity"/>
    <property type="evidence" value="ECO:0007669"/>
    <property type="project" value="InterPro"/>
</dbReference>
<dbReference type="GO" id="GO:0050873">
    <property type="term" value="P:brown fat cell differentiation"/>
    <property type="evidence" value="ECO:0007669"/>
    <property type="project" value="Ensembl"/>
</dbReference>
<dbReference type="GO" id="GO:0006886">
    <property type="term" value="P:intracellular protein transport"/>
    <property type="evidence" value="ECO:0000318"/>
    <property type="project" value="GO_Central"/>
</dbReference>
<dbReference type="GO" id="GO:0016192">
    <property type="term" value="P:vesicle-mediated transport"/>
    <property type="evidence" value="ECO:0000318"/>
    <property type="project" value="GO_Central"/>
</dbReference>
<dbReference type="CDD" id="cd04152">
    <property type="entry name" value="Arl4_Arl7"/>
    <property type="match status" value="1"/>
</dbReference>
<dbReference type="FunFam" id="3.40.50.300:FF:000658">
    <property type="entry name" value="ADP-ribosylation factor-like protein 4A"/>
    <property type="match status" value="1"/>
</dbReference>
<dbReference type="Gene3D" id="3.40.50.300">
    <property type="entry name" value="P-loop containing nucleotide triphosphate hydrolases"/>
    <property type="match status" value="1"/>
</dbReference>
<dbReference type="InterPro" id="IPR027417">
    <property type="entry name" value="P-loop_NTPase"/>
</dbReference>
<dbReference type="InterPro" id="IPR005225">
    <property type="entry name" value="Small_GTP-bd"/>
</dbReference>
<dbReference type="InterPro" id="IPR024156">
    <property type="entry name" value="Small_GTPase_ARF"/>
</dbReference>
<dbReference type="InterPro" id="IPR006689">
    <property type="entry name" value="Small_GTPase_ARF/SAR"/>
</dbReference>
<dbReference type="NCBIfam" id="TIGR00231">
    <property type="entry name" value="small_GTP"/>
    <property type="match status" value="1"/>
</dbReference>
<dbReference type="PANTHER" id="PTHR11711">
    <property type="entry name" value="ADP RIBOSYLATION FACTOR-RELATED"/>
    <property type="match status" value="1"/>
</dbReference>
<dbReference type="Pfam" id="PF00025">
    <property type="entry name" value="Arf"/>
    <property type="match status" value="1"/>
</dbReference>
<dbReference type="PRINTS" id="PR00449">
    <property type="entry name" value="RASTRNSFRMNG"/>
</dbReference>
<dbReference type="SMART" id="SM00177">
    <property type="entry name" value="ARF"/>
    <property type="match status" value="1"/>
</dbReference>
<dbReference type="SMART" id="SM00175">
    <property type="entry name" value="RAB"/>
    <property type="match status" value="1"/>
</dbReference>
<dbReference type="SMART" id="SM00173">
    <property type="entry name" value="RAS"/>
    <property type="match status" value="1"/>
</dbReference>
<dbReference type="SMART" id="SM00178">
    <property type="entry name" value="SAR"/>
    <property type="match status" value="1"/>
</dbReference>
<dbReference type="SUPFAM" id="SSF52540">
    <property type="entry name" value="P-loop containing nucleoside triphosphate hydrolases"/>
    <property type="match status" value="1"/>
</dbReference>
<dbReference type="PROSITE" id="PS51417">
    <property type="entry name" value="ARF"/>
    <property type="match status" value="1"/>
</dbReference>
<gene>
    <name type="primary">ARL4A</name>
    <name type="synonym">ARL4</name>
</gene>
<protein>
    <recommendedName>
        <fullName>ADP-ribosylation factor-like protein 4A</fullName>
    </recommendedName>
</protein>
<feature type="initiator methionine" description="Removed" evidence="2">
    <location>
        <position position="1"/>
    </location>
</feature>
<feature type="chain" id="PRO_0000207459" description="ADP-ribosylation factor-like protein 4A">
    <location>
        <begin position="2"/>
        <end position="200"/>
    </location>
</feature>
<feature type="binding site" evidence="1">
    <location>
        <begin position="27"/>
        <end position="34"/>
    </location>
    <ligand>
        <name>GTP</name>
        <dbReference type="ChEBI" id="CHEBI:37565"/>
    </ligand>
</feature>
<feature type="binding site" evidence="1">
    <location>
        <begin position="75"/>
        <end position="79"/>
    </location>
    <ligand>
        <name>GTP</name>
        <dbReference type="ChEBI" id="CHEBI:37565"/>
    </ligand>
</feature>
<feature type="binding site" evidence="1">
    <location>
        <begin position="134"/>
        <end position="137"/>
    </location>
    <ligand>
        <name>GTP</name>
        <dbReference type="ChEBI" id="CHEBI:37565"/>
    </ligand>
</feature>
<feature type="lipid moiety-binding region" description="N-myristoyl glycine" evidence="2">
    <location>
        <position position="2"/>
    </location>
</feature>
<feature type="mutagenesis site" description="Inhibits relocalization of CYTH2 to the plasma membrane. Strongly localized in the nucleolus." evidence="3 4">
    <original>T</original>
    <variation>N</variation>
    <location>
        <position position="34"/>
    </location>
</feature>
<feature type="mutagenesis site" description="Localized in the nucleus and nucleolus." evidence="3 4">
    <original>Q</original>
    <variation>L</variation>
    <location>
        <position position="79"/>
    </location>
</feature>
<name>ARL4A_HUMAN</name>
<evidence type="ECO:0000250" key="1"/>
<evidence type="ECO:0000255" key="2"/>
<evidence type="ECO:0000269" key="3">
    <source>
    </source>
</evidence>
<evidence type="ECO:0000269" key="4">
    <source>
    </source>
</evidence>
<evidence type="ECO:0000305" key="5"/>
<accession>P40617</accession>
<accession>A4D119</accession>
<accession>P80418</accession>
<accession>Q49AF5</accession>
<reference key="1">
    <citation type="submission" date="1995-01" db="UniProtKB">
        <authorList>
            <person name="Rosenwald A.G."/>
            <person name="Kahn R.A."/>
        </authorList>
    </citation>
    <scope>NUCLEOTIDE SEQUENCE [MRNA]</scope>
    <source>
        <tissue>Umbilical vein endothelial cell</tissue>
    </source>
</reference>
<reference key="2">
    <citation type="submission" date="1996-10" db="EMBL/GenBank/DDBJ databases">
        <authorList>
            <person name="Choe I."/>
        </authorList>
    </citation>
    <scope>NUCLEOTIDE SEQUENCE [MRNA]</scope>
    <source>
        <tissue>Liver</tissue>
    </source>
</reference>
<reference key="3">
    <citation type="journal article" date="2004" name="Nat. Genet.">
        <title>Complete sequencing and characterization of 21,243 full-length human cDNAs.</title>
        <authorList>
            <person name="Ota T."/>
            <person name="Suzuki Y."/>
            <person name="Nishikawa T."/>
            <person name="Otsuki T."/>
            <person name="Sugiyama T."/>
            <person name="Irie R."/>
            <person name="Wakamatsu A."/>
            <person name="Hayashi K."/>
            <person name="Sato H."/>
            <person name="Nagai K."/>
            <person name="Kimura K."/>
            <person name="Makita H."/>
            <person name="Sekine M."/>
            <person name="Obayashi M."/>
            <person name="Nishi T."/>
            <person name="Shibahara T."/>
            <person name="Tanaka T."/>
            <person name="Ishii S."/>
            <person name="Yamamoto J."/>
            <person name="Saito K."/>
            <person name="Kawai Y."/>
            <person name="Isono Y."/>
            <person name="Nakamura Y."/>
            <person name="Nagahari K."/>
            <person name="Murakami K."/>
            <person name="Yasuda T."/>
            <person name="Iwayanagi T."/>
            <person name="Wagatsuma M."/>
            <person name="Shiratori A."/>
            <person name="Sudo H."/>
            <person name="Hosoiri T."/>
            <person name="Kaku Y."/>
            <person name="Kodaira H."/>
            <person name="Kondo H."/>
            <person name="Sugawara M."/>
            <person name="Takahashi M."/>
            <person name="Kanda K."/>
            <person name="Yokoi T."/>
            <person name="Furuya T."/>
            <person name="Kikkawa E."/>
            <person name="Omura Y."/>
            <person name="Abe K."/>
            <person name="Kamihara K."/>
            <person name="Katsuta N."/>
            <person name="Sato K."/>
            <person name="Tanikawa M."/>
            <person name="Yamazaki M."/>
            <person name="Ninomiya K."/>
            <person name="Ishibashi T."/>
            <person name="Yamashita H."/>
            <person name="Murakawa K."/>
            <person name="Fujimori K."/>
            <person name="Tanai H."/>
            <person name="Kimata M."/>
            <person name="Watanabe M."/>
            <person name="Hiraoka S."/>
            <person name="Chiba Y."/>
            <person name="Ishida S."/>
            <person name="Ono Y."/>
            <person name="Takiguchi S."/>
            <person name="Watanabe S."/>
            <person name="Yosida M."/>
            <person name="Hotuta T."/>
            <person name="Kusano J."/>
            <person name="Kanehori K."/>
            <person name="Takahashi-Fujii A."/>
            <person name="Hara H."/>
            <person name="Tanase T.-O."/>
            <person name="Nomura Y."/>
            <person name="Togiya S."/>
            <person name="Komai F."/>
            <person name="Hara R."/>
            <person name="Takeuchi K."/>
            <person name="Arita M."/>
            <person name="Imose N."/>
            <person name="Musashino K."/>
            <person name="Yuuki H."/>
            <person name="Oshima A."/>
            <person name="Sasaki N."/>
            <person name="Aotsuka S."/>
            <person name="Yoshikawa Y."/>
            <person name="Matsunawa H."/>
            <person name="Ichihara T."/>
            <person name="Shiohata N."/>
            <person name="Sano S."/>
            <person name="Moriya S."/>
            <person name="Momiyama H."/>
            <person name="Satoh N."/>
            <person name="Takami S."/>
            <person name="Terashima Y."/>
            <person name="Suzuki O."/>
            <person name="Nakagawa S."/>
            <person name="Senoh A."/>
            <person name="Mizoguchi H."/>
            <person name="Goto Y."/>
            <person name="Shimizu F."/>
            <person name="Wakebe H."/>
            <person name="Hishigaki H."/>
            <person name="Watanabe T."/>
            <person name="Sugiyama A."/>
            <person name="Takemoto M."/>
            <person name="Kawakami B."/>
            <person name="Yamazaki M."/>
            <person name="Watanabe K."/>
            <person name="Kumagai A."/>
            <person name="Itakura S."/>
            <person name="Fukuzumi Y."/>
            <person name="Fujimori Y."/>
            <person name="Komiyama M."/>
            <person name="Tashiro H."/>
            <person name="Tanigami A."/>
            <person name="Fujiwara T."/>
            <person name="Ono T."/>
            <person name="Yamada K."/>
            <person name="Fujii Y."/>
            <person name="Ozaki K."/>
            <person name="Hirao M."/>
            <person name="Ohmori Y."/>
            <person name="Kawabata A."/>
            <person name="Hikiji T."/>
            <person name="Kobatake N."/>
            <person name="Inagaki H."/>
            <person name="Ikema Y."/>
            <person name="Okamoto S."/>
            <person name="Okitani R."/>
            <person name="Kawakami T."/>
            <person name="Noguchi S."/>
            <person name="Itoh T."/>
            <person name="Shigeta K."/>
            <person name="Senba T."/>
            <person name="Matsumura K."/>
            <person name="Nakajima Y."/>
            <person name="Mizuno T."/>
            <person name="Morinaga M."/>
            <person name="Sasaki M."/>
            <person name="Togashi T."/>
            <person name="Oyama M."/>
            <person name="Hata H."/>
            <person name="Watanabe M."/>
            <person name="Komatsu T."/>
            <person name="Mizushima-Sugano J."/>
            <person name="Satoh T."/>
            <person name="Shirai Y."/>
            <person name="Takahashi Y."/>
            <person name="Nakagawa K."/>
            <person name="Okumura K."/>
            <person name="Nagase T."/>
            <person name="Nomura N."/>
            <person name="Kikuchi H."/>
            <person name="Masuho Y."/>
            <person name="Yamashita R."/>
            <person name="Nakai K."/>
            <person name="Yada T."/>
            <person name="Nakamura Y."/>
            <person name="Ohara O."/>
            <person name="Isogai T."/>
            <person name="Sugano S."/>
        </authorList>
    </citation>
    <scope>NUCLEOTIDE SEQUENCE [LARGE SCALE MRNA]</scope>
</reference>
<reference key="4">
    <citation type="submission" date="2002-03" db="EMBL/GenBank/DDBJ databases">
        <title>cDNA clones of human proteins involved in signal transduction sequenced by the Guthrie cDNA resource center (www.cdna.org).</title>
        <authorList>
            <person name="Puhl H.L. III"/>
            <person name="Ikeda S.R."/>
            <person name="Aronstam R.S."/>
        </authorList>
    </citation>
    <scope>NUCLEOTIDE SEQUENCE [LARGE SCALE MRNA]</scope>
    <source>
        <tissue>Brain</tissue>
    </source>
</reference>
<reference key="5">
    <citation type="journal article" date="2003" name="Science">
        <title>Human chromosome 7: DNA sequence and biology.</title>
        <authorList>
            <person name="Scherer S.W."/>
            <person name="Cheung J."/>
            <person name="MacDonald J.R."/>
            <person name="Osborne L.R."/>
            <person name="Nakabayashi K."/>
            <person name="Herbrick J.-A."/>
            <person name="Carson A.R."/>
            <person name="Parker-Katiraee L."/>
            <person name="Skaug J."/>
            <person name="Khaja R."/>
            <person name="Zhang J."/>
            <person name="Hudek A.K."/>
            <person name="Li M."/>
            <person name="Haddad M."/>
            <person name="Duggan G.E."/>
            <person name="Fernandez B.A."/>
            <person name="Kanematsu E."/>
            <person name="Gentles S."/>
            <person name="Christopoulos C.C."/>
            <person name="Choufani S."/>
            <person name="Kwasnicka D."/>
            <person name="Zheng X.H."/>
            <person name="Lai Z."/>
            <person name="Nusskern D.R."/>
            <person name="Zhang Q."/>
            <person name="Gu Z."/>
            <person name="Lu F."/>
            <person name="Zeesman S."/>
            <person name="Nowaczyk M.J."/>
            <person name="Teshima I."/>
            <person name="Chitayat D."/>
            <person name="Shuman C."/>
            <person name="Weksberg R."/>
            <person name="Zackai E.H."/>
            <person name="Grebe T.A."/>
            <person name="Cox S.R."/>
            <person name="Kirkpatrick S.J."/>
            <person name="Rahman N."/>
            <person name="Friedman J.M."/>
            <person name="Heng H.H.Q."/>
            <person name="Pelicci P.G."/>
            <person name="Lo-Coco F."/>
            <person name="Belloni E."/>
            <person name="Shaffer L.G."/>
            <person name="Pober B."/>
            <person name="Morton C.C."/>
            <person name="Gusella J.F."/>
            <person name="Bruns G.A.P."/>
            <person name="Korf B.R."/>
            <person name="Quade B.J."/>
            <person name="Ligon A.H."/>
            <person name="Ferguson H."/>
            <person name="Higgins A.W."/>
            <person name="Leach N.T."/>
            <person name="Herrick S.R."/>
            <person name="Lemyre E."/>
            <person name="Farra C.G."/>
            <person name="Kim H.-G."/>
            <person name="Summers A.M."/>
            <person name="Gripp K.W."/>
            <person name="Roberts W."/>
            <person name="Szatmari P."/>
            <person name="Winsor E.J.T."/>
            <person name="Grzeschik K.-H."/>
            <person name="Teebi A."/>
            <person name="Minassian B.A."/>
            <person name="Kere J."/>
            <person name="Armengol L."/>
            <person name="Pujana M.A."/>
            <person name="Estivill X."/>
            <person name="Wilson M.D."/>
            <person name="Koop B.F."/>
            <person name="Tosi S."/>
            <person name="Moore G.E."/>
            <person name="Boright A.P."/>
            <person name="Zlotorynski E."/>
            <person name="Kerem B."/>
            <person name="Kroisel P.M."/>
            <person name="Petek E."/>
            <person name="Oscier D.G."/>
            <person name="Mould S.J."/>
            <person name="Doehner H."/>
            <person name="Doehner K."/>
            <person name="Rommens J.M."/>
            <person name="Vincent J.B."/>
            <person name="Venter J.C."/>
            <person name="Li P.W."/>
            <person name="Mural R.J."/>
            <person name="Adams M.D."/>
            <person name="Tsui L.-C."/>
        </authorList>
    </citation>
    <scope>NUCLEOTIDE SEQUENCE [LARGE SCALE GENOMIC DNA]</scope>
</reference>
<reference key="6">
    <citation type="submission" date="2005-07" db="EMBL/GenBank/DDBJ databases">
        <authorList>
            <person name="Mural R.J."/>
            <person name="Istrail S."/>
            <person name="Sutton G.G."/>
            <person name="Florea L."/>
            <person name="Halpern A.L."/>
            <person name="Mobarry C.M."/>
            <person name="Lippert R."/>
            <person name="Walenz B."/>
            <person name="Shatkay H."/>
            <person name="Dew I."/>
            <person name="Miller J.R."/>
            <person name="Flanigan M.J."/>
            <person name="Edwards N.J."/>
            <person name="Bolanos R."/>
            <person name="Fasulo D."/>
            <person name="Halldorsson B.V."/>
            <person name="Hannenhalli S."/>
            <person name="Turner R."/>
            <person name="Yooseph S."/>
            <person name="Lu F."/>
            <person name="Nusskern D.R."/>
            <person name="Shue B.C."/>
            <person name="Zheng X.H."/>
            <person name="Zhong F."/>
            <person name="Delcher A.L."/>
            <person name="Huson D.H."/>
            <person name="Kravitz S.A."/>
            <person name="Mouchard L."/>
            <person name="Reinert K."/>
            <person name="Remington K.A."/>
            <person name="Clark A.G."/>
            <person name="Waterman M.S."/>
            <person name="Eichler E.E."/>
            <person name="Adams M.D."/>
            <person name="Hunkapiller M.W."/>
            <person name="Myers E.W."/>
            <person name="Venter J.C."/>
        </authorList>
    </citation>
    <scope>NUCLEOTIDE SEQUENCE [LARGE SCALE GENOMIC DNA]</scope>
</reference>
<reference key="7">
    <citation type="journal article" date="2004" name="Genome Res.">
        <title>The status, quality, and expansion of the NIH full-length cDNA project: the Mammalian Gene Collection (MGC).</title>
        <authorList>
            <consortium name="The MGC Project Team"/>
        </authorList>
    </citation>
    <scope>NUCLEOTIDE SEQUENCE [LARGE SCALE MRNA]</scope>
    <source>
        <tissue>Melanoma</tissue>
    </source>
</reference>
<reference key="8">
    <citation type="journal article" date="1999" name="FEBS Lett.">
        <title>ADP-ribosylation factor (ARF)-like 4, 6, and 7 represent a subgroup of the ARF family characterization by rapid nucleotide exchange and a nuclear localization signal.</title>
        <authorList>
            <person name="Jacobs S."/>
            <person name="Schilf C."/>
            <person name="Fliegert F."/>
            <person name="Koling S."/>
            <person name="Weber Y."/>
            <person name="Schurmann A."/>
            <person name="Joost H.-G."/>
        </authorList>
    </citation>
    <scope>SUBCELLULAR LOCATION</scope>
</reference>
<reference key="9">
    <citation type="journal article" date="2000" name="J. Biol. Chem.">
        <title>ARL4, an ARF-like protein that is developmentally regulated and localized to nuclei and nucleoli.</title>
        <authorList>
            <person name="Lin C.Y."/>
            <person name="Huang P.H."/>
            <person name="Liao W.L."/>
            <person name="Cheng H.J."/>
            <person name="Huang C.F."/>
            <person name="Kuo J.C."/>
            <person name="Patton W.A."/>
            <person name="Massenburg D."/>
            <person name="Moss J."/>
            <person name="Lee F.J."/>
        </authorList>
    </citation>
    <scope>FUNCTION</scope>
    <scope>MYRISTOYLATION</scope>
    <scope>INTERACTION WITH KPNA2</scope>
    <scope>MUTAGENESIS OF THR-34 AND GLN-79</scope>
    <scope>SUBCELLULAR LOCATION</scope>
</reference>
<reference key="10">
    <citation type="journal article" date="2000" name="J. Cell Biol.">
        <title>ADP ribosylation factor-like protein 2 (Arl2) regulates the interaction of tubulin-folding cofactor D with native tubulin.</title>
        <authorList>
            <person name="Bhamidipati A."/>
            <person name="Lewis S.A."/>
            <person name="Cowan N.J."/>
        </authorList>
    </citation>
    <scope>LACK OF INTERACTION WITH ARL4A</scope>
</reference>
<reference key="11">
    <citation type="journal article" date="2007" name="Curr. Biol.">
        <title>The Arl4 family of small G proteins can recruit the cytohesin Arf6 exchange factors to the plasma membrane.</title>
        <authorList>
            <person name="Hofmann I."/>
            <person name="Thompson A."/>
            <person name="Sanderson C.M."/>
            <person name="Munro S."/>
        </authorList>
    </citation>
    <scope>FUNCTION</scope>
    <scope>INTERACTION WITH CYTH2</scope>
    <scope>SUBCELLULAR LOCATION</scope>
    <scope>MUTAGENESIS OF THR-34 AND GLN-79</scope>
</reference>
<proteinExistence type="evidence at protein level"/>
<keyword id="KW-1003">Cell membrane</keyword>
<keyword id="KW-0963">Cytoplasm</keyword>
<keyword id="KW-0342">GTP-binding</keyword>
<keyword id="KW-0449">Lipoprotein</keyword>
<keyword id="KW-0472">Membrane</keyword>
<keyword id="KW-0519">Myristate</keyword>
<keyword id="KW-0547">Nucleotide-binding</keyword>
<keyword id="KW-0539">Nucleus</keyword>
<keyword id="KW-1267">Proteomics identification</keyword>
<keyword id="KW-1185">Reference proteome</keyword>